<organism>
    <name type="scientific">Bigelowiella natans</name>
    <name type="common">Pedinomonas minutissima</name>
    <name type="synonym">Chlorarachnion sp. (strain CCMP621)</name>
    <dbReference type="NCBI Taxonomy" id="227086"/>
    <lineage>
        <taxon>Eukaryota</taxon>
        <taxon>Sar</taxon>
        <taxon>Rhizaria</taxon>
        <taxon>Cercozoa</taxon>
        <taxon>Chlorarachniophyceae</taxon>
        <taxon>Bigelowiella</taxon>
    </lineage>
</organism>
<name>PSBD_BIGNA</name>
<sequence length="352" mass="39433">MTIAIGKAEEERGVFDIIDDWLRRDRFVFIGWSGLLLFPCAYLALGGWLTGTTFVTSWYTHGLASSYLEGCNFLTAAVSTPSNAVGHSLLFLWGLEAQGNFTRWCQLGGLWPFVALHGSFALIGFMLRQFEIAQSVRLRPYNAIAFSGPISVFVSVFLIYPLGQSGWFFAPSFGVAAIFRFILFFQGFHNWTLNPFHMMGVAGVLGAALLCAIHGATVENTLFEDGDGANTFRAFNPTQQEETYSMVTANRFWSQIFGVAFSNKRWLHFFMLFVPVTGLWMSALGVVGLALNLRAYDFVSQEIRAAEDPEFETFYTKNILLNEGIRAWMVAQDQPHEKIVFPEEVLPRGNAL</sequence>
<reference key="1">
    <citation type="journal article" date="2007" name="Mol. Biol. Evol.">
        <title>The complete chloroplast genome of the chlorarachniophyte Bigelowiella natans: evidence for independent origins of chlorarachniophyte and euglenid secondary endosymbionts.</title>
        <authorList>
            <person name="Rogers M.B."/>
            <person name="Gilson P.R."/>
            <person name="Su V."/>
            <person name="McFadden G.I."/>
            <person name="Keeling P.J."/>
        </authorList>
    </citation>
    <scope>NUCLEOTIDE SEQUENCE [LARGE SCALE GENOMIC DNA]</scope>
</reference>
<proteinExistence type="inferred from homology"/>
<geneLocation type="chloroplast"/>
<gene>
    <name evidence="1" type="primary">psbD</name>
</gene>
<comment type="function">
    <text evidence="1">Photosystem II (PSII) is a light-driven water:plastoquinone oxidoreductase that uses light energy to abstract electrons from H(2)O, generating O(2) and a proton gradient subsequently used for ATP formation. It consists of a core antenna complex that captures photons, and an electron transfer chain that converts photonic excitation into a charge separation. The D1/D2 (PsbA/PsbD) reaction center heterodimer binds P680, the primary electron donor of PSII as well as several subsequent electron acceptors. D2 is needed for assembly of a stable PSII complex.</text>
</comment>
<comment type="catalytic activity">
    <reaction evidence="1">
        <text>2 a plastoquinone + 4 hnu + 2 H2O = 2 a plastoquinol + O2</text>
        <dbReference type="Rhea" id="RHEA:36359"/>
        <dbReference type="Rhea" id="RHEA-COMP:9561"/>
        <dbReference type="Rhea" id="RHEA-COMP:9562"/>
        <dbReference type="ChEBI" id="CHEBI:15377"/>
        <dbReference type="ChEBI" id="CHEBI:15379"/>
        <dbReference type="ChEBI" id="CHEBI:17757"/>
        <dbReference type="ChEBI" id="CHEBI:30212"/>
        <dbReference type="ChEBI" id="CHEBI:62192"/>
        <dbReference type="EC" id="1.10.3.9"/>
    </reaction>
</comment>
<comment type="cofactor">
    <text evidence="1">The D1/D2 heterodimer binds P680, chlorophylls that are the primary electron donor of PSII, and subsequent electron acceptors. It shares a non-heme iron and each subunit binds pheophytin, quinone, additional chlorophylls, carotenoids and lipids. There is also a Cl(-1) ion associated with D1 and D2, which is required for oxygen evolution. The PSII complex binds additional chlorophylls, carotenoids and specific lipids.</text>
</comment>
<comment type="subunit">
    <text evidence="2">PSII is composed of 1 copy each of membrane proteins PsbA, PsbB, PsbC, PsbD, PsbE, PsbF, PsbH, PsbI, PsbJ, PsbK, PsbL, PsbM, PsbT, PsbY, PsbZ, Psb30/Ycf12, at least 3 peripheral proteins of the oxygen-evolving complex and a large number of cofactors. It forms dimeric complexes.</text>
</comment>
<comment type="subcellular location">
    <subcellularLocation>
        <location evidence="1">Plastid</location>
        <location evidence="1">Chloroplast thylakoid membrane</location>
        <topology evidence="1">Multi-pass membrane protein</topology>
    </subcellularLocation>
</comment>
<comment type="miscellaneous">
    <text evidence="1">2 of the reaction center chlorophylls (ChlD1 and ChlD2) are entirely coordinated by water.</text>
</comment>
<comment type="similarity">
    <text evidence="1">Belongs to the reaction center PufL/M/PsbA/D family.</text>
</comment>
<protein>
    <recommendedName>
        <fullName evidence="1">Photosystem II D2 protein</fullName>
        <shortName evidence="1">PSII D2 protein</shortName>
        <ecNumber evidence="1">1.10.3.9</ecNumber>
    </recommendedName>
    <alternativeName>
        <fullName evidence="1">Photosystem Q(A) protein</fullName>
    </alternativeName>
</protein>
<dbReference type="EC" id="1.10.3.9" evidence="1"/>
<dbReference type="EMBL" id="DQ851108">
    <property type="protein sequence ID" value="ABG91392.1"/>
    <property type="molecule type" value="Genomic_DNA"/>
</dbReference>
<dbReference type="RefSeq" id="YP_778560.1">
    <property type="nucleotide sequence ID" value="NC_008408.1"/>
</dbReference>
<dbReference type="SMR" id="Q06J67"/>
<dbReference type="GeneID" id="4352977"/>
<dbReference type="GO" id="GO:0009535">
    <property type="term" value="C:chloroplast thylakoid membrane"/>
    <property type="evidence" value="ECO:0007669"/>
    <property type="project" value="UniProtKB-SubCell"/>
</dbReference>
<dbReference type="GO" id="GO:0009523">
    <property type="term" value="C:photosystem II"/>
    <property type="evidence" value="ECO:0007669"/>
    <property type="project" value="UniProtKB-KW"/>
</dbReference>
<dbReference type="GO" id="GO:0016168">
    <property type="term" value="F:chlorophyll binding"/>
    <property type="evidence" value="ECO:0007669"/>
    <property type="project" value="UniProtKB-UniRule"/>
</dbReference>
<dbReference type="GO" id="GO:0045156">
    <property type="term" value="F:electron transporter, transferring electrons within the cyclic electron transport pathway of photosynthesis activity"/>
    <property type="evidence" value="ECO:0007669"/>
    <property type="project" value="InterPro"/>
</dbReference>
<dbReference type="GO" id="GO:0005506">
    <property type="term" value="F:iron ion binding"/>
    <property type="evidence" value="ECO:0007669"/>
    <property type="project" value="UniProtKB-UniRule"/>
</dbReference>
<dbReference type="GO" id="GO:0016491">
    <property type="term" value="F:oxidoreductase activity"/>
    <property type="evidence" value="ECO:0007669"/>
    <property type="project" value="UniProtKB-KW"/>
</dbReference>
<dbReference type="GO" id="GO:0009772">
    <property type="term" value="P:photosynthetic electron transport in photosystem II"/>
    <property type="evidence" value="ECO:0007669"/>
    <property type="project" value="InterPro"/>
</dbReference>
<dbReference type="FunFam" id="1.20.85.10:FF:000001">
    <property type="entry name" value="photosystem II D2 protein-like"/>
    <property type="match status" value="1"/>
</dbReference>
<dbReference type="Gene3D" id="1.20.85.10">
    <property type="entry name" value="Photosystem II protein D1-like"/>
    <property type="match status" value="1"/>
</dbReference>
<dbReference type="HAMAP" id="MF_01383">
    <property type="entry name" value="PSII_PsbD_D2"/>
    <property type="match status" value="1"/>
</dbReference>
<dbReference type="InterPro" id="IPR055266">
    <property type="entry name" value="D1/D2"/>
</dbReference>
<dbReference type="InterPro" id="IPR036854">
    <property type="entry name" value="Photo_II_D1/D2_sf"/>
</dbReference>
<dbReference type="InterPro" id="IPR000484">
    <property type="entry name" value="Photo_RC_L/M"/>
</dbReference>
<dbReference type="InterPro" id="IPR055265">
    <property type="entry name" value="Photo_RC_L/M_CS"/>
</dbReference>
<dbReference type="InterPro" id="IPR005868">
    <property type="entry name" value="PSII_PsbD/D2"/>
</dbReference>
<dbReference type="NCBIfam" id="TIGR01152">
    <property type="entry name" value="psbD"/>
    <property type="match status" value="1"/>
</dbReference>
<dbReference type="PANTHER" id="PTHR33149:SF12">
    <property type="entry name" value="PHOTOSYSTEM II D2 PROTEIN"/>
    <property type="match status" value="1"/>
</dbReference>
<dbReference type="PANTHER" id="PTHR33149">
    <property type="entry name" value="PHOTOSYSTEM II PROTEIN D1"/>
    <property type="match status" value="1"/>
</dbReference>
<dbReference type="Pfam" id="PF00124">
    <property type="entry name" value="Photo_RC"/>
    <property type="match status" value="1"/>
</dbReference>
<dbReference type="PRINTS" id="PR00256">
    <property type="entry name" value="REACTNCENTRE"/>
</dbReference>
<dbReference type="SUPFAM" id="SSF81483">
    <property type="entry name" value="Bacterial photosystem II reaction centre, L and M subunits"/>
    <property type="match status" value="1"/>
</dbReference>
<dbReference type="PROSITE" id="PS00244">
    <property type="entry name" value="REACTION_CENTER"/>
    <property type="match status" value="1"/>
</dbReference>
<keyword id="KW-0148">Chlorophyll</keyword>
<keyword id="KW-0150">Chloroplast</keyword>
<keyword id="KW-0157">Chromophore</keyword>
<keyword id="KW-0249">Electron transport</keyword>
<keyword id="KW-0408">Iron</keyword>
<keyword id="KW-0460">Magnesium</keyword>
<keyword id="KW-0472">Membrane</keyword>
<keyword id="KW-0479">Metal-binding</keyword>
<keyword id="KW-0560">Oxidoreductase</keyword>
<keyword id="KW-0602">Photosynthesis</keyword>
<keyword id="KW-0604">Photosystem II</keyword>
<keyword id="KW-0934">Plastid</keyword>
<keyword id="KW-0793">Thylakoid</keyword>
<keyword id="KW-0812">Transmembrane</keyword>
<keyword id="KW-1133">Transmembrane helix</keyword>
<keyword id="KW-0813">Transport</keyword>
<accession>Q06J67</accession>
<evidence type="ECO:0000255" key="1">
    <source>
        <dbReference type="HAMAP-Rule" id="MF_01383"/>
    </source>
</evidence>
<evidence type="ECO:0000305" key="2"/>
<feature type="chain" id="PRO_0000310409" description="Photosystem II D2 protein">
    <location>
        <begin position="1"/>
        <end position="352"/>
    </location>
</feature>
<feature type="transmembrane region" description="Helical" evidence="1">
    <location>
        <begin position="40"/>
        <end position="60"/>
    </location>
</feature>
<feature type="transmembrane region" description="Helical" evidence="1">
    <location>
        <begin position="124"/>
        <end position="140"/>
    </location>
</feature>
<feature type="transmembrane region" description="Helical" evidence="1">
    <location>
        <begin position="152"/>
        <end position="165"/>
    </location>
</feature>
<feature type="transmembrane region" description="Helical" evidence="1">
    <location>
        <begin position="207"/>
        <end position="227"/>
    </location>
</feature>
<feature type="transmembrane region" description="Helical" evidence="1">
    <location>
        <begin position="278"/>
        <end position="294"/>
    </location>
</feature>
<feature type="binding site" description="axial binding residue" evidence="1">
    <location>
        <position position="117"/>
    </location>
    <ligand>
        <name>chlorophyll a</name>
        <dbReference type="ChEBI" id="CHEBI:58416"/>
        <label>ChlzD2</label>
    </ligand>
    <ligandPart>
        <name>Mg</name>
        <dbReference type="ChEBI" id="CHEBI:25107"/>
    </ligandPart>
</feature>
<feature type="binding site" evidence="1">
    <location>
        <position position="129"/>
    </location>
    <ligand>
        <name>pheophytin a</name>
        <dbReference type="ChEBI" id="CHEBI:136840"/>
        <label>D2</label>
    </ligand>
</feature>
<feature type="binding site" evidence="1">
    <location>
        <position position="142"/>
    </location>
    <ligand>
        <name>pheophytin a</name>
        <dbReference type="ChEBI" id="CHEBI:136840"/>
        <label>D2</label>
    </ligand>
</feature>
<feature type="binding site" description="axial binding residue" evidence="1">
    <location>
        <position position="197"/>
    </location>
    <ligand>
        <name>chlorophyll a</name>
        <dbReference type="ChEBI" id="CHEBI:58416"/>
        <label>PD2</label>
    </ligand>
    <ligandPart>
        <name>Mg</name>
        <dbReference type="ChEBI" id="CHEBI:25107"/>
    </ligandPart>
</feature>
<feature type="binding site" evidence="1">
    <location>
        <position position="214"/>
    </location>
    <ligand>
        <name>a plastoquinone</name>
        <dbReference type="ChEBI" id="CHEBI:17757"/>
        <label>Q(A)</label>
    </ligand>
</feature>
<feature type="binding site" evidence="1">
    <location>
        <position position="214"/>
    </location>
    <ligand>
        <name>Fe cation</name>
        <dbReference type="ChEBI" id="CHEBI:24875"/>
        <note>ligand shared with heterodimeric partner</note>
    </ligand>
</feature>
<feature type="binding site" evidence="1">
    <location>
        <position position="261"/>
    </location>
    <ligand>
        <name>a plastoquinone</name>
        <dbReference type="ChEBI" id="CHEBI:17757"/>
        <label>Q(A)</label>
    </ligand>
</feature>
<feature type="binding site" evidence="1">
    <location>
        <position position="268"/>
    </location>
    <ligand>
        <name>Fe cation</name>
        <dbReference type="ChEBI" id="CHEBI:24875"/>
        <note>ligand shared with heterodimeric partner</note>
    </ligand>
</feature>